<reference key="1">
    <citation type="journal article" date="1999" name="J. Virol.">
        <title>Human herpesvirus 6B genome sequence: coding content and comparison with human herpesvirus 6A.</title>
        <authorList>
            <person name="Dominguez G."/>
            <person name="Dambaugh T.R."/>
            <person name="Stamey F.R."/>
            <person name="Dewhurst S."/>
            <person name="Inoue N."/>
            <person name="Pellett P.E."/>
        </authorList>
    </citation>
    <scope>NUCLEOTIDE SEQUENCE [LARGE SCALE GENOMIC DNA]</scope>
</reference>
<sequence length="200" mass="20571">MSRVFSCVLRACVCAGLCCWVCMGVICGDCQRWWRRRCARWGRVGPRVLDGGAWRVRSGDGARSVSRTCETERAPSAARSPVYSPPFVLVSSSSSSSCSSACSSRVPSPPPSPHAASHAVCAEGGRDLPMHGADGDADEGTDGTLLEKGGADEGAGGNATGCPEDTHGFARSPGDLMGEMNGDLGDEGETGEGGDNGEGE</sequence>
<protein>
    <recommendedName>
        <fullName>Uncharacterized protein DR3</fullName>
    </recommendedName>
</protein>
<organismHost>
    <name type="scientific">Homo sapiens</name>
    <name type="common">Human</name>
    <dbReference type="NCBI Taxonomy" id="9606"/>
</organismHost>
<organism>
    <name type="scientific">Human herpesvirus 6B (strain Z29)</name>
    <name type="common">HHV-6 variant B</name>
    <name type="synonym">Human B lymphotropic virus</name>
    <dbReference type="NCBI Taxonomy" id="36351"/>
    <lineage>
        <taxon>Viruses</taxon>
        <taxon>Duplodnaviria</taxon>
        <taxon>Heunggongvirae</taxon>
        <taxon>Peploviricota</taxon>
        <taxon>Herviviricetes</taxon>
        <taxon>Herpesvirales</taxon>
        <taxon>Orthoherpesviridae</taxon>
        <taxon>Betaherpesvirinae</taxon>
        <taxon>Roseolovirus</taxon>
        <taxon>Roseolovirus humanbeta6b</taxon>
        <taxon>Human herpesvirus 6B</taxon>
    </lineage>
</organism>
<proteinExistence type="inferred from homology"/>
<evidence type="ECO:0000255" key="1"/>
<evidence type="ECO:0000256" key="2">
    <source>
        <dbReference type="SAM" id="MobiDB-lite"/>
    </source>
</evidence>
<gene>
    <name type="primary">DR3</name>
</gene>
<accession>Q9PX32</accession>
<keyword id="KW-1185">Reference proteome</keyword>
<keyword id="KW-0732">Signal</keyword>
<dbReference type="EMBL" id="AF157706">
    <property type="protein sequence ID" value="AAD49618.1"/>
    <property type="molecule type" value="Genomic_DNA"/>
</dbReference>
<dbReference type="EMBL" id="AF157706">
    <property type="protein sequence ID" value="AAD49683.1"/>
    <property type="molecule type" value="Genomic_DNA"/>
</dbReference>
<dbReference type="RefSeq" id="NP_050177.1">
    <property type="nucleotide sequence ID" value="NC_000898.1"/>
</dbReference>
<dbReference type="RefSeq" id="NP_050274.1">
    <property type="nucleotide sequence ID" value="NC_000898.1"/>
</dbReference>
<dbReference type="DNASU" id="1497002"/>
<dbReference type="GeneID" id="1497002"/>
<dbReference type="GeneID" id="1497095"/>
<dbReference type="KEGG" id="vg:1497002"/>
<dbReference type="KEGG" id="vg:1497095"/>
<dbReference type="Proteomes" id="UP000006930">
    <property type="component" value="Segment"/>
</dbReference>
<feature type="signal peptide" evidence="1">
    <location>
        <begin position="1"/>
        <end position="24"/>
    </location>
</feature>
<feature type="chain" id="PRO_0000408404" description="Uncharacterized protein DR3">
    <location>
        <begin position="25"/>
        <end position="200"/>
    </location>
</feature>
<feature type="region of interest" description="Disordered" evidence="2">
    <location>
        <begin position="124"/>
        <end position="200"/>
    </location>
</feature>
<feature type="compositionally biased region" description="Acidic residues" evidence="2">
    <location>
        <begin position="184"/>
        <end position="200"/>
    </location>
</feature>
<name>DR3_HHV6Z</name>